<feature type="chain" id="PRO_0000367151" description="Spastin">
    <location>
        <begin position="1"/>
        <end position="777"/>
    </location>
</feature>
<feature type="topological domain" description="Cytoplasmic" evidence="3">
    <location>
        <begin position="1"/>
        <end position="116"/>
    </location>
</feature>
<feature type="intramembrane region" description="Helical" evidence="3">
    <location>
        <begin position="117"/>
        <end position="137"/>
    </location>
</feature>
<feature type="topological domain" description="Cytoplasmic" evidence="3">
    <location>
        <begin position="138"/>
        <end position="777"/>
    </location>
</feature>
<feature type="domain" description="MIT" evidence="2">
    <location>
        <begin position="238"/>
        <end position="313"/>
    </location>
</feature>
<feature type="region of interest" description="Required for localization to punctate cytoplasmic foci" evidence="1">
    <location>
        <begin position="1"/>
        <end position="215"/>
    </location>
</feature>
<feature type="region of interest" description="Disordered" evidence="4">
    <location>
        <begin position="1"/>
        <end position="103"/>
    </location>
</feature>
<feature type="region of interest" description="Sufficient for interaction with microtubules and microtubule severing" evidence="1">
    <location>
        <begin position="213"/>
        <end position="777"/>
    </location>
</feature>
<feature type="region of interest" description="Disordered" evidence="4">
    <location>
        <begin position="327"/>
        <end position="474"/>
    </location>
</feature>
<feature type="region of interest" description="Required for interaction with microtubules" evidence="1">
    <location>
        <begin position="462"/>
        <end position="474"/>
    </location>
</feature>
<feature type="compositionally biased region" description="Low complexity" evidence="4">
    <location>
        <begin position="1"/>
        <end position="24"/>
    </location>
</feature>
<feature type="compositionally biased region" description="Low complexity" evidence="4">
    <location>
        <begin position="51"/>
        <end position="76"/>
    </location>
</feature>
<feature type="compositionally biased region" description="Low complexity" evidence="4">
    <location>
        <begin position="85"/>
        <end position="94"/>
    </location>
</feature>
<feature type="compositionally biased region" description="Polar residues" evidence="4">
    <location>
        <begin position="372"/>
        <end position="389"/>
    </location>
</feature>
<feature type="compositionally biased region" description="Polar residues" evidence="4">
    <location>
        <begin position="406"/>
        <end position="425"/>
    </location>
</feature>
<feature type="compositionally biased region" description="Polar residues" evidence="4">
    <location>
        <begin position="444"/>
        <end position="460"/>
    </location>
</feature>
<feature type="compositionally biased region" description="Low complexity" evidence="4">
    <location>
        <begin position="461"/>
        <end position="471"/>
    </location>
</feature>
<feature type="binding site" evidence="3">
    <location>
        <begin position="542"/>
        <end position="549"/>
    </location>
    <ligand>
        <name>ATP</name>
        <dbReference type="ChEBI" id="CHEBI:30616"/>
    </ligand>
</feature>
<organism>
    <name type="scientific">Drosophila willistoni</name>
    <name type="common">Fruit fly</name>
    <dbReference type="NCBI Taxonomy" id="7260"/>
    <lineage>
        <taxon>Eukaryota</taxon>
        <taxon>Metazoa</taxon>
        <taxon>Ecdysozoa</taxon>
        <taxon>Arthropoda</taxon>
        <taxon>Hexapoda</taxon>
        <taxon>Insecta</taxon>
        <taxon>Pterygota</taxon>
        <taxon>Neoptera</taxon>
        <taxon>Endopterygota</taxon>
        <taxon>Diptera</taxon>
        <taxon>Brachycera</taxon>
        <taxon>Muscomorpha</taxon>
        <taxon>Ephydroidea</taxon>
        <taxon>Drosophilidae</taxon>
        <taxon>Drosophila</taxon>
        <taxon>Sophophora</taxon>
    </lineage>
</organism>
<accession>B4NBP4</accession>
<protein>
    <recommendedName>
        <fullName evidence="3">Spastin</fullName>
        <ecNumber evidence="3">5.6.1.1</ecNumber>
    </recommendedName>
</protein>
<dbReference type="EC" id="5.6.1.1" evidence="3"/>
<dbReference type="EMBL" id="CH964232">
    <property type="protein sequence ID" value="EDW81208.1"/>
    <property type="molecule type" value="Genomic_DNA"/>
</dbReference>
<dbReference type="SMR" id="B4NBP4"/>
<dbReference type="STRING" id="7260.B4NBP4"/>
<dbReference type="EnsemblMetazoa" id="FBtr0241799">
    <property type="protein sequence ID" value="FBpp0240291"/>
    <property type="gene ID" value="FBgn0213159"/>
</dbReference>
<dbReference type="EnsemblMetazoa" id="XM_002070186.4">
    <property type="protein sequence ID" value="XP_002070222.1"/>
    <property type="gene ID" value="LOC6648037"/>
</dbReference>
<dbReference type="GeneID" id="6648037"/>
<dbReference type="KEGG" id="dwi:6648037"/>
<dbReference type="eggNOG" id="KOG0740">
    <property type="taxonomic scope" value="Eukaryota"/>
</dbReference>
<dbReference type="HOGENOM" id="CLU_000688_21_5_1"/>
<dbReference type="OMA" id="KSREPML"/>
<dbReference type="OrthoDB" id="10251136at2759"/>
<dbReference type="PhylomeDB" id="B4NBP4"/>
<dbReference type="Proteomes" id="UP000007798">
    <property type="component" value="Unassembled WGS sequence"/>
</dbReference>
<dbReference type="GO" id="GO:0005813">
    <property type="term" value="C:centrosome"/>
    <property type="evidence" value="ECO:0000250"/>
    <property type="project" value="UniProtKB"/>
</dbReference>
<dbReference type="GO" id="GO:0005694">
    <property type="term" value="C:chromosome"/>
    <property type="evidence" value="ECO:0007669"/>
    <property type="project" value="UniProtKB-SubCell"/>
</dbReference>
<dbReference type="GO" id="GO:0005811">
    <property type="term" value="C:lipid droplet"/>
    <property type="evidence" value="ECO:0007669"/>
    <property type="project" value="UniProtKB-SubCell"/>
</dbReference>
<dbReference type="GO" id="GO:0016020">
    <property type="term" value="C:membrane"/>
    <property type="evidence" value="ECO:0007669"/>
    <property type="project" value="UniProtKB-SubCell"/>
</dbReference>
<dbReference type="GO" id="GO:0005874">
    <property type="term" value="C:microtubule"/>
    <property type="evidence" value="ECO:0007669"/>
    <property type="project" value="UniProtKB-UniRule"/>
</dbReference>
<dbReference type="GO" id="GO:0031594">
    <property type="term" value="C:neuromuscular junction"/>
    <property type="evidence" value="ECO:0007669"/>
    <property type="project" value="EnsemblMetazoa"/>
</dbReference>
<dbReference type="GO" id="GO:0005819">
    <property type="term" value="C:spindle"/>
    <property type="evidence" value="ECO:0007669"/>
    <property type="project" value="UniProtKB-UniRule"/>
</dbReference>
<dbReference type="GO" id="GO:0008021">
    <property type="term" value="C:synaptic vesicle"/>
    <property type="evidence" value="ECO:0007669"/>
    <property type="project" value="EnsemblMetazoa"/>
</dbReference>
<dbReference type="GO" id="GO:0043195">
    <property type="term" value="C:terminal bouton"/>
    <property type="evidence" value="ECO:0007669"/>
    <property type="project" value="EnsemblMetazoa"/>
</dbReference>
<dbReference type="GO" id="GO:0005524">
    <property type="term" value="F:ATP binding"/>
    <property type="evidence" value="ECO:0007669"/>
    <property type="project" value="UniProtKB-UniRule"/>
</dbReference>
<dbReference type="GO" id="GO:0016887">
    <property type="term" value="F:ATP hydrolysis activity"/>
    <property type="evidence" value="ECO:0007669"/>
    <property type="project" value="InterPro"/>
</dbReference>
<dbReference type="GO" id="GO:0008017">
    <property type="term" value="F:microtubule binding"/>
    <property type="evidence" value="ECO:0000250"/>
    <property type="project" value="UniProtKB"/>
</dbReference>
<dbReference type="GO" id="GO:0008568">
    <property type="term" value="F:microtubule severing ATPase activity"/>
    <property type="evidence" value="ECO:0000250"/>
    <property type="project" value="UniProtKB"/>
</dbReference>
<dbReference type="GO" id="GO:0008344">
    <property type="term" value="P:adult locomotory behavior"/>
    <property type="evidence" value="ECO:0007669"/>
    <property type="project" value="UniProtKB-UniRule"/>
</dbReference>
<dbReference type="GO" id="GO:0051301">
    <property type="term" value="P:cell division"/>
    <property type="evidence" value="ECO:0007669"/>
    <property type="project" value="UniProtKB-KW"/>
</dbReference>
<dbReference type="GO" id="GO:0035099">
    <property type="term" value="P:hemocyte migration"/>
    <property type="evidence" value="ECO:0007669"/>
    <property type="project" value="EnsemblMetazoa"/>
</dbReference>
<dbReference type="GO" id="GO:0051013">
    <property type="term" value="P:microtubule severing"/>
    <property type="evidence" value="ECO:0000250"/>
    <property type="project" value="UniProtKB"/>
</dbReference>
<dbReference type="GO" id="GO:0007079">
    <property type="term" value="P:mitotic chromosome movement towards spindle pole"/>
    <property type="evidence" value="ECO:0007669"/>
    <property type="project" value="UniProtKB-UniRule"/>
</dbReference>
<dbReference type="GO" id="GO:0000022">
    <property type="term" value="P:mitotic spindle elongation"/>
    <property type="evidence" value="ECO:0007669"/>
    <property type="project" value="UniProtKB-UniRule"/>
</dbReference>
<dbReference type="GO" id="GO:0007026">
    <property type="term" value="P:negative regulation of microtubule depolymerization"/>
    <property type="evidence" value="ECO:0007669"/>
    <property type="project" value="EnsemblMetazoa"/>
</dbReference>
<dbReference type="GO" id="GO:1900074">
    <property type="term" value="P:negative regulation of neuromuscular synaptic transmission"/>
    <property type="evidence" value="ECO:0007669"/>
    <property type="project" value="EnsemblMetazoa"/>
</dbReference>
<dbReference type="GO" id="GO:0045886">
    <property type="term" value="P:negative regulation of synaptic assembly at neuromuscular junction"/>
    <property type="evidence" value="ECO:0007669"/>
    <property type="project" value="EnsemblMetazoa"/>
</dbReference>
<dbReference type="GO" id="GO:0007399">
    <property type="term" value="P:nervous system development"/>
    <property type="evidence" value="ECO:0007669"/>
    <property type="project" value="UniProtKB-KW"/>
</dbReference>
<dbReference type="GO" id="GO:0048691">
    <property type="term" value="P:positive regulation of axon extension involved in regeneration"/>
    <property type="evidence" value="ECO:0007669"/>
    <property type="project" value="EnsemblMetazoa"/>
</dbReference>
<dbReference type="GO" id="GO:0050775">
    <property type="term" value="P:positive regulation of dendrite morphogenesis"/>
    <property type="evidence" value="ECO:0007669"/>
    <property type="project" value="EnsemblMetazoa"/>
</dbReference>
<dbReference type="GO" id="GO:0045834">
    <property type="term" value="P:positive regulation of lipid metabolic process"/>
    <property type="evidence" value="ECO:0007669"/>
    <property type="project" value="EnsemblMetazoa"/>
</dbReference>
<dbReference type="GO" id="GO:0031117">
    <property type="term" value="P:positive regulation of microtubule depolymerization"/>
    <property type="evidence" value="ECO:0007669"/>
    <property type="project" value="UniProtKB-UniRule"/>
</dbReference>
<dbReference type="GO" id="GO:1900075">
    <property type="term" value="P:positive regulation of neuromuscular synaptic transmission"/>
    <property type="evidence" value="ECO:0007669"/>
    <property type="project" value="EnsemblMetazoa"/>
</dbReference>
<dbReference type="GO" id="GO:0045887">
    <property type="term" value="P:positive regulation of synaptic assembly at neuromuscular junction"/>
    <property type="evidence" value="ECO:0007669"/>
    <property type="project" value="EnsemblMetazoa"/>
</dbReference>
<dbReference type="GO" id="GO:0034214">
    <property type="term" value="P:protein hexamerization"/>
    <property type="evidence" value="ECO:0007669"/>
    <property type="project" value="UniProtKB-UniRule"/>
</dbReference>
<dbReference type="GO" id="GO:2000331">
    <property type="term" value="P:regulation of terminal button organization"/>
    <property type="evidence" value="ECO:0007669"/>
    <property type="project" value="EnsemblMetazoa"/>
</dbReference>
<dbReference type="CDD" id="cd02679">
    <property type="entry name" value="MIT_spastin"/>
    <property type="match status" value="1"/>
</dbReference>
<dbReference type="CDD" id="cd19524">
    <property type="entry name" value="RecA-like_spastin"/>
    <property type="match status" value="1"/>
</dbReference>
<dbReference type="FunFam" id="3.40.50.300:FF:000093">
    <property type="entry name" value="Fidgetin-like 1"/>
    <property type="match status" value="1"/>
</dbReference>
<dbReference type="FunFam" id="1.10.8.60:FF:000036">
    <property type="entry name" value="Spastin"/>
    <property type="match status" value="1"/>
</dbReference>
<dbReference type="FunFam" id="1.20.58.80:FF:000006">
    <property type="entry name" value="Spastin"/>
    <property type="match status" value="1"/>
</dbReference>
<dbReference type="Gene3D" id="1.10.8.60">
    <property type="match status" value="1"/>
</dbReference>
<dbReference type="Gene3D" id="3.40.50.300">
    <property type="entry name" value="P-loop containing nucleotide triphosphate hydrolases"/>
    <property type="match status" value="1"/>
</dbReference>
<dbReference type="Gene3D" id="1.20.58.80">
    <property type="entry name" value="Phosphotransferase system, lactose/cellobiose-type IIA subunit"/>
    <property type="match status" value="1"/>
</dbReference>
<dbReference type="HAMAP" id="MF_03021">
    <property type="entry name" value="Spastin"/>
    <property type="match status" value="1"/>
</dbReference>
<dbReference type="InterPro" id="IPR003593">
    <property type="entry name" value="AAA+_ATPase"/>
</dbReference>
<dbReference type="InterPro" id="IPR041569">
    <property type="entry name" value="AAA_lid_3"/>
</dbReference>
<dbReference type="InterPro" id="IPR003959">
    <property type="entry name" value="ATPase_AAA_core"/>
</dbReference>
<dbReference type="InterPro" id="IPR003960">
    <property type="entry name" value="ATPase_AAA_CS"/>
</dbReference>
<dbReference type="InterPro" id="IPR007330">
    <property type="entry name" value="MIT_dom"/>
</dbReference>
<dbReference type="InterPro" id="IPR036181">
    <property type="entry name" value="MIT_dom_sf"/>
</dbReference>
<dbReference type="InterPro" id="IPR050304">
    <property type="entry name" value="MT-severing_AAA_ATPase"/>
</dbReference>
<dbReference type="InterPro" id="IPR027417">
    <property type="entry name" value="P-loop_NTPase"/>
</dbReference>
<dbReference type="InterPro" id="IPR015415">
    <property type="entry name" value="Spast_Vps4_C"/>
</dbReference>
<dbReference type="InterPro" id="IPR017179">
    <property type="entry name" value="Spastin"/>
</dbReference>
<dbReference type="PANTHER" id="PTHR23074">
    <property type="entry name" value="AAA DOMAIN-CONTAINING"/>
    <property type="match status" value="1"/>
</dbReference>
<dbReference type="PANTHER" id="PTHR23074:SF86">
    <property type="entry name" value="SPASTIN"/>
    <property type="match status" value="1"/>
</dbReference>
<dbReference type="Pfam" id="PF00004">
    <property type="entry name" value="AAA"/>
    <property type="match status" value="1"/>
</dbReference>
<dbReference type="Pfam" id="PF17862">
    <property type="entry name" value="AAA_lid_3"/>
    <property type="match status" value="1"/>
</dbReference>
<dbReference type="Pfam" id="PF09336">
    <property type="entry name" value="Vps4_C"/>
    <property type="match status" value="1"/>
</dbReference>
<dbReference type="SMART" id="SM00382">
    <property type="entry name" value="AAA"/>
    <property type="match status" value="1"/>
</dbReference>
<dbReference type="SMART" id="SM00745">
    <property type="entry name" value="MIT"/>
    <property type="match status" value="1"/>
</dbReference>
<dbReference type="SUPFAM" id="SSF116846">
    <property type="entry name" value="MIT domain"/>
    <property type="match status" value="1"/>
</dbReference>
<dbReference type="SUPFAM" id="SSF52540">
    <property type="entry name" value="P-loop containing nucleoside triphosphate hydrolases"/>
    <property type="match status" value="1"/>
</dbReference>
<dbReference type="PROSITE" id="PS00674">
    <property type="entry name" value="AAA"/>
    <property type="match status" value="1"/>
</dbReference>
<keyword id="KW-0067">ATP-binding</keyword>
<keyword id="KW-0131">Cell cycle</keyword>
<keyword id="KW-0132">Cell division</keyword>
<keyword id="KW-0158">Chromosome</keyword>
<keyword id="KW-0963">Cytoplasm</keyword>
<keyword id="KW-0206">Cytoskeleton</keyword>
<keyword id="KW-0217">Developmental protein</keyword>
<keyword id="KW-0221">Differentiation</keyword>
<keyword id="KW-0413">Isomerase</keyword>
<keyword id="KW-0551">Lipid droplet</keyword>
<keyword id="KW-0472">Membrane</keyword>
<keyword id="KW-0493">Microtubule</keyword>
<keyword id="KW-0498">Mitosis</keyword>
<keyword id="KW-0524">Neurogenesis</keyword>
<keyword id="KW-0547">Nucleotide-binding</keyword>
<keyword id="KW-1185">Reference proteome</keyword>
<sequence>MVRTKSSSSSASSSSQKSPIKSNNGAGGGGSSSSHRQSHRTSIDERKSSSHAHSNNSNVSSSSRRAATATSGSSSPEGDDDTTTDDLTPTGSSPRSCNGRGHSSVHKQNLYVVSFPIIFLFNVLRSLIYQLFCIFRYLYGASTKVLYRPHRRDCNIEIVVQNSKEQQLQLQQHQHNQTLSYSLETGGVSGGSGGEQQVQVQPQRIRALQPLEMATNRPGGGYSPGPGDPLLAKQKHHHRRAFEYISKALKIDEENEGHKELAIELYRKGIKELEDGIAVDCWNGRGDVWDRAQRLHDKMQTNLSMARDRLHFLALREEDLQMQRLSLKEKQPAPKQPQRSQTKDPVKQPMLTSLNADPVKMKVRSSGYGPKQNGTSSSRPAPSGQTATGASGRKLTVGTKRPGNLPVTNKSQTLPRNLGSKTTVGAVQRQPAKTAATPPAVRRQFSSGRNTPPQRSRTPINNNASSGSGASTPMVSVKGVEQKLVQLILDEIVEGGAKVEWTDIAGQDVAKQALQEMVILPSVRPELFTGLRAPAKGLLLFGPPGNGKTLLARAVATECSATFLNISAASLTSKYVGDGEKLVRALFAVARHMQPSIIFIDEVDSLLSERSSNEHEASRRLKTEFLVEFDGLPGNPDGDRIVVLAATNRPQELDEAALRRFTKRVYVSLPDEQTRELLLNRLLQKQGSPLDTEALRRLAKITEGYSGSDLTALAKDAALEPIRELNVEQVKCLDISAMRPITEKDFHNSLKRIRRSVAPQSLNSYEKWSQDYGDITI</sequence>
<reference key="1">
    <citation type="journal article" date="2007" name="Nature">
        <title>Evolution of genes and genomes on the Drosophila phylogeny.</title>
        <authorList>
            <consortium name="Drosophila 12 genomes consortium"/>
        </authorList>
    </citation>
    <scope>NUCLEOTIDE SEQUENCE [LARGE SCALE GENOMIC DNA]</scope>
    <source>
        <strain>Tucson 14030-0811.24</strain>
    </source>
</reference>
<name>SPAST_DROWI</name>
<gene>
    <name evidence="3" type="primary">spas</name>
    <name type="ORF">GK11148</name>
</gene>
<proteinExistence type="inferred from homology"/>
<evidence type="ECO:0000250" key="1">
    <source>
        <dbReference type="UniProtKB" id="Q8I0P1"/>
    </source>
</evidence>
<evidence type="ECO:0000255" key="2"/>
<evidence type="ECO:0000255" key="3">
    <source>
        <dbReference type="HAMAP-Rule" id="MF_03021"/>
    </source>
</evidence>
<evidence type="ECO:0000256" key="4">
    <source>
        <dbReference type="SAM" id="MobiDB-lite"/>
    </source>
</evidence>
<comment type="function">
    <text evidence="3">ATP-dependent microtubule severing protein. Stimulates microtubule minus-end depolymerization and poleward microtubule flux in the mitotic spindle. Regulates microtubule stability in the neuromuscular junction synapse. Involved in lipid metabolism by regulating the size and distribution of lipid droplets. Involved in axon regeneration by regulating microtubule severing.</text>
</comment>
<comment type="catalytic activity">
    <reaction evidence="3">
        <text>n ATP + n H2O + a microtubule = n ADP + n phosphate + (n+1) alpha/beta tubulin heterodimers.</text>
        <dbReference type="EC" id="5.6.1.1"/>
    </reaction>
</comment>
<comment type="subunit">
    <text evidence="3">Homohexamer. The homohexamer is stabilized by ATP-binding. The homohexamer may adopt a ring conformation through which microtubules pass prior to being severed. Interacts with microtubules. Interacts with atl; may be involved in microtubule dynamics.</text>
</comment>
<comment type="subcellular location">
    <subcellularLocation>
        <location evidence="3">Membrane</location>
        <topology evidence="3">Peripheral membrane protein</topology>
    </subcellularLocation>
    <subcellularLocation>
        <location evidence="3">Cytoplasm</location>
        <location evidence="3">Cytoskeleton</location>
        <location evidence="3">Microtubule organizing center</location>
        <location evidence="3">Centrosome</location>
    </subcellularLocation>
    <subcellularLocation>
        <location evidence="3">Cytoplasm</location>
        <location evidence="3">Cytoskeleton</location>
    </subcellularLocation>
    <subcellularLocation>
        <location evidence="3">Chromosome</location>
    </subcellularLocation>
    <subcellularLocation>
        <location evidence="3">Lipid droplet</location>
    </subcellularLocation>
    <text evidence="3">Forms an intramembrane hairpin-like structure in the membrane. Colocalizes with cellular microtubule arrays. Localizes to chromosomes from prometaphase/metaphase to anaphase, and this requires microtubules. Localizes to discrete punctate cytoplasmic foci which may correspond to secretory vesicles.</text>
</comment>
<comment type="similarity">
    <text evidence="3">Belongs to the AAA ATPase family. Spastin subfamily.</text>
</comment>